<gene>
    <name evidence="1" type="primary">gatC</name>
    <name type="ordered locus">LA_2508</name>
</gene>
<evidence type="ECO:0000255" key="1">
    <source>
        <dbReference type="HAMAP-Rule" id="MF_00122"/>
    </source>
</evidence>
<reference key="1">
    <citation type="journal article" date="2003" name="Nature">
        <title>Unique physiological and pathogenic features of Leptospira interrogans revealed by whole-genome sequencing.</title>
        <authorList>
            <person name="Ren S.-X."/>
            <person name="Fu G."/>
            <person name="Jiang X.-G."/>
            <person name="Zeng R."/>
            <person name="Miao Y.-G."/>
            <person name="Xu H."/>
            <person name="Zhang Y.-X."/>
            <person name="Xiong H."/>
            <person name="Lu G."/>
            <person name="Lu L.-F."/>
            <person name="Jiang H.-Q."/>
            <person name="Jia J."/>
            <person name="Tu Y.-F."/>
            <person name="Jiang J.-X."/>
            <person name="Gu W.-Y."/>
            <person name="Zhang Y.-Q."/>
            <person name="Cai Z."/>
            <person name="Sheng H.-H."/>
            <person name="Yin H.-F."/>
            <person name="Zhang Y."/>
            <person name="Zhu G.-F."/>
            <person name="Wan M."/>
            <person name="Huang H.-L."/>
            <person name="Qian Z."/>
            <person name="Wang S.-Y."/>
            <person name="Ma W."/>
            <person name="Yao Z.-J."/>
            <person name="Shen Y."/>
            <person name="Qiang B.-Q."/>
            <person name="Xia Q.-C."/>
            <person name="Guo X.-K."/>
            <person name="Danchin A."/>
            <person name="Saint Girons I."/>
            <person name="Somerville R.L."/>
            <person name="Wen Y.-M."/>
            <person name="Shi M.-H."/>
            <person name="Chen Z."/>
            <person name="Xu J.-G."/>
            <person name="Zhao G.-P."/>
        </authorList>
    </citation>
    <scope>NUCLEOTIDE SEQUENCE [LARGE SCALE GENOMIC DNA]</scope>
    <source>
        <strain>56601</strain>
    </source>
</reference>
<proteinExistence type="inferred from homology"/>
<keyword id="KW-0067">ATP-binding</keyword>
<keyword id="KW-0436">Ligase</keyword>
<keyword id="KW-0547">Nucleotide-binding</keyword>
<keyword id="KW-0648">Protein biosynthesis</keyword>
<keyword id="KW-1185">Reference proteome</keyword>
<feature type="chain" id="PRO_0000105306" description="Aspartyl/glutamyl-tRNA(Asn/Gln) amidotransferase subunit C">
    <location>
        <begin position="1"/>
        <end position="96"/>
    </location>
</feature>
<name>GATC_LEPIN</name>
<dbReference type="EC" id="6.3.5.-" evidence="1"/>
<dbReference type="EMBL" id="AE010300">
    <property type="protein sequence ID" value="AAN49707.1"/>
    <property type="molecule type" value="Genomic_DNA"/>
</dbReference>
<dbReference type="RefSeq" id="NP_712689.1">
    <property type="nucleotide sequence ID" value="NC_004342.2"/>
</dbReference>
<dbReference type="RefSeq" id="WP_001024432.1">
    <property type="nucleotide sequence ID" value="NC_004342.2"/>
</dbReference>
<dbReference type="SMR" id="Q8F3A0"/>
<dbReference type="STRING" id="189518.LA_2508"/>
<dbReference type="PaxDb" id="189518-LA_2508"/>
<dbReference type="EnsemblBacteria" id="AAN49707">
    <property type="protein sequence ID" value="AAN49707"/>
    <property type="gene ID" value="LA_2508"/>
</dbReference>
<dbReference type="GeneID" id="61144761"/>
<dbReference type="KEGG" id="lil:LA_2508"/>
<dbReference type="PATRIC" id="fig|189518.3.peg.2490"/>
<dbReference type="HOGENOM" id="CLU_105899_2_1_12"/>
<dbReference type="InParanoid" id="Q8F3A0"/>
<dbReference type="OrthoDB" id="9813938at2"/>
<dbReference type="Proteomes" id="UP000001408">
    <property type="component" value="Chromosome I"/>
</dbReference>
<dbReference type="GO" id="GO:0050566">
    <property type="term" value="F:asparaginyl-tRNA synthase (glutamine-hydrolyzing) activity"/>
    <property type="evidence" value="ECO:0007669"/>
    <property type="project" value="RHEA"/>
</dbReference>
<dbReference type="GO" id="GO:0005524">
    <property type="term" value="F:ATP binding"/>
    <property type="evidence" value="ECO:0007669"/>
    <property type="project" value="UniProtKB-KW"/>
</dbReference>
<dbReference type="GO" id="GO:0050567">
    <property type="term" value="F:glutaminyl-tRNA synthase (glutamine-hydrolyzing) activity"/>
    <property type="evidence" value="ECO:0007669"/>
    <property type="project" value="UniProtKB-UniRule"/>
</dbReference>
<dbReference type="GO" id="GO:0070681">
    <property type="term" value="P:glutaminyl-tRNAGln biosynthesis via transamidation"/>
    <property type="evidence" value="ECO:0000318"/>
    <property type="project" value="GO_Central"/>
</dbReference>
<dbReference type="GO" id="GO:0006450">
    <property type="term" value="P:regulation of translational fidelity"/>
    <property type="evidence" value="ECO:0007669"/>
    <property type="project" value="InterPro"/>
</dbReference>
<dbReference type="GO" id="GO:0006412">
    <property type="term" value="P:translation"/>
    <property type="evidence" value="ECO:0007669"/>
    <property type="project" value="UniProtKB-UniRule"/>
</dbReference>
<dbReference type="Gene3D" id="1.10.20.60">
    <property type="entry name" value="Glu-tRNAGln amidotransferase C subunit, N-terminal domain"/>
    <property type="match status" value="1"/>
</dbReference>
<dbReference type="HAMAP" id="MF_00122">
    <property type="entry name" value="GatC"/>
    <property type="match status" value="1"/>
</dbReference>
<dbReference type="InterPro" id="IPR036113">
    <property type="entry name" value="Asp/Glu-ADT_sf_sub_c"/>
</dbReference>
<dbReference type="InterPro" id="IPR003837">
    <property type="entry name" value="GatC"/>
</dbReference>
<dbReference type="NCBIfam" id="TIGR00135">
    <property type="entry name" value="gatC"/>
    <property type="match status" value="1"/>
</dbReference>
<dbReference type="PANTHER" id="PTHR15004">
    <property type="entry name" value="GLUTAMYL-TRNA(GLN) AMIDOTRANSFERASE SUBUNIT C, MITOCHONDRIAL"/>
    <property type="match status" value="1"/>
</dbReference>
<dbReference type="PANTHER" id="PTHR15004:SF0">
    <property type="entry name" value="GLUTAMYL-TRNA(GLN) AMIDOTRANSFERASE SUBUNIT C, MITOCHONDRIAL"/>
    <property type="match status" value="1"/>
</dbReference>
<dbReference type="Pfam" id="PF02686">
    <property type="entry name" value="GatC"/>
    <property type="match status" value="1"/>
</dbReference>
<dbReference type="SUPFAM" id="SSF141000">
    <property type="entry name" value="Glu-tRNAGln amidotransferase C subunit"/>
    <property type="match status" value="1"/>
</dbReference>
<accession>Q8F3A0</accession>
<sequence>MNINEDSLQKIAELSRLKIRSEEKEATLQDFNKILEYVDQIKGLDVSSIKDDEIYLHHENAIRPDLAGKHLSREEIESFAPSFQNGYFVVPKVIET</sequence>
<organism>
    <name type="scientific">Leptospira interrogans serogroup Icterohaemorrhagiae serovar Lai (strain 56601)</name>
    <dbReference type="NCBI Taxonomy" id="189518"/>
    <lineage>
        <taxon>Bacteria</taxon>
        <taxon>Pseudomonadati</taxon>
        <taxon>Spirochaetota</taxon>
        <taxon>Spirochaetia</taxon>
        <taxon>Leptospirales</taxon>
        <taxon>Leptospiraceae</taxon>
        <taxon>Leptospira</taxon>
    </lineage>
</organism>
<protein>
    <recommendedName>
        <fullName evidence="1">Aspartyl/glutamyl-tRNA(Asn/Gln) amidotransferase subunit C</fullName>
        <shortName evidence="1">Asp/Glu-ADT subunit C</shortName>
        <ecNumber evidence="1">6.3.5.-</ecNumber>
    </recommendedName>
</protein>
<comment type="function">
    <text evidence="1">Allows the formation of correctly charged Asn-tRNA(Asn) or Gln-tRNA(Gln) through the transamidation of misacylated Asp-tRNA(Asn) or Glu-tRNA(Gln) in organisms which lack either or both of asparaginyl-tRNA or glutaminyl-tRNA synthetases. The reaction takes place in the presence of glutamine and ATP through an activated phospho-Asp-tRNA(Asn) or phospho-Glu-tRNA(Gln).</text>
</comment>
<comment type="catalytic activity">
    <reaction evidence="1">
        <text>L-glutamyl-tRNA(Gln) + L-glutamine + ATP + H2O = L-glutaminyl-tRNA(Gln) + L-glutamate + ADP + phosphate + H(+)</text>
        <dbReference type="Rhea" id="RHEA:17521"/>
        <dbReference type="Rhea" id="RHEA-COMP:9681"/>
        <dbReference type="Rhea" id="RHEA-COMP:9684"/>
        <dbReference type="ChEBI" id="CHEBI:15377"/>
        <dbReference type="ChEBI" id="CHEBI:15378"/>
        <dbReference type="ChEBI" id="CHEBI:29985"/>
        <dbReference type="ChEBI" id="CHEBI:30616"/>
        <dbReference type="ChEBI" id="CHEBI:43474"/>
        <dbReference type="ChEBI" id="CHEBI:58359"/>
        <dbReference type="ChEBI" id="CHEBI:78520"/>
        <dbReference type="ChEBI" id="CHEBI:78521"/>
        <dbReference type="ChEBI" id="CHEBI:456216"/>
    </reaction>
</comment>
<comment type="catalytic activity">
    <reaction evidence="1">
        <text>L-aspartyl-tRNA(Asn) + L-glutamine + ATP + H2O = L-asparaginyl-tRNA(Asn) + L-glutamate + ADP + phosphate + 2 H(+)</text>
        <dbReference type="Rhea" id="RHEA:14513"/>
        <dbReference type="Rhea" id="RHEA-COMP:9674"/>
        <dbReference type="Rhea" id="RHEA-COMP:9677"/>
        <dbReference type="ChEBI" id="CHEBI:15377"/>
        <dbReference type="ChEBI" id="CHEBI:15378"/>
        <dbReference type="ChEBI" id="CHEBI:29985"/>
        <dbReference type="ChEBI" id="CHEBI:30616"/>
        <dbReference type="ChEBI" id="CHEBI:43474"/>
        <dbReference type="ChEBI" id="CHEBI:58359"/>
        <dbReference type="ChEBI" id="CHEBI:78515"/>
        <dbReference type="ChEBI" id="CHEBI:78516"/>
        <dbReference type="ChEBI" id="CHEBI:456216"/>
    </reaction>
</comment>
<comment type="subunit">
    <text evidence="1">Heterotrimer of A, B and C subunits.</text>
</comment>
<comment type="similarity">
    <text evidence="1">Belongs to the GatC family.</text>
</comment>